<evidence type="ECO:0000255" key="1">
    <source>
        <dbReference type="HAMAP-Rule" id="MF_04000"/>
    </source>
</evidence>
<evidence type="ECO:0000256" key="2">
    <source>
        <dbReference type="SAM" id="MobiDB-lite"/>
    </source>
</evidence>
<dbReference type="EC" id="5.6.2.4" evidence="1"/>
<dbReference type="EMBL" id="L41216">
    <property type="protein sequence ID" value="AAA74213.1"/>
    <property type="molecule type" value="Genomic_DNA"/>
</dbReference>
<dbReference type="SMR" id="Q84293"/>
<dbReference type="Proteomes" id="UP000007675">
    <property type="component" value="Genome"/>
</dbReference>
<dbReference type="GO" id="GO:0042025">
    <property type="term" value="C:host cell nucleus"/>
    <property type="evidence" value="ECO:0007669"/>
    <property type="project" value="UniProtKB-SubCell"/>
</dbReference>
<dbReference type="GO" id="GO:0005524">
    <property type="term" value="F:ATP binding"/>
    <property type="evidence" value="ECO:0007669"/>
    <property type="project" value="UniProtKB-UniRule"/>
</dbReference>
<dbReference type="GO" id="GO:0016887">
    <property type="term" value="F:ATP hydrolysis activity"/>
    <property type="evidence" value="ECO:0007669"/>
    <property type="project" value="RHEA"/>
</dbReference>
<dbReference type="GO" id="GO:0003677">
    <property type="term" value="F:DNA binding"/>
    <property type="evidence" value="ECO:0007669"/>
    <property type="project" value="UniProtKB-UniRule"/>
</dbReference>
<dbReference type="GO" id="GO:0003678">
    <property type="term" value="F:DNA helicase activity"/>
    <property type="evidence" value="ECO:0007669"/>
    <property type="project" value="UniProtKB-UniRule"/>
</dbReference>
<dbReference type="GO" id="GO:0006260">
    <property type="term" value="P:DNA replication"/>
    <property type="evidence" value="ECO:0007669"/>
    <property type="project" value="UniProtKB-UniRule"/>
</dbReference>
<dbReference type="FunFam" id="1.10.10.510:FF:000001">
    <property type="entry name" value="Replication protein E1"/>
    <property type="match status" value="1"/>
</dbReference>
<dbReference type="FunFam" id="3.40.50.300:FF:004036">
    <property type="entry name" value="Replication protein E1"/>
    <property type="match status" value="1"/>
</dbReference>
<dbReference type="Gene3D" id="3.40.1310.10">
    <property type="match status" value="1"/>
</dbReference>
<dbReference type="Gene3D" id="3.40.50.300">
    <property type="entry name" value="P-loop containing nucleotide triphosphate hydrolases"/>
    <property type="match status" value="1"/>
</dbReference>
<dbReference type="Gene3D" id="1.10.10.510">
    <property type="entry name" value="Zinc finger, large T-antigen D1 domain"/>
    <property type="match status" value="1"/>
</dbReference>
<dbReference type="HAMAP" id="MF_04000">
    <property type="entry name" value="PPV_E1"/>
    <property type="match status" value="1"/>
</dbReference>
<dbReference type="InterPro" id="IPR014015">
    <property type="entry name" value="Helicase_SF3_DNA-vir"/>
</dbReference>
<dbReference type="InterPro" id="IPR027417">
    <property type="entry name" value="P-loop_NTPase"/>
</dbReference>
<dbReference type="InterPro" id="IPR001177">
    <property type="entry name" value="PPV_DNA_helicase_E1_C"/>
</dbReference>
<dbReference type="InterPro" id="IPR014000">
    <property type="entry name" value="PPV_DNA_helicase_E1_N"/>
</dbReference>
<dbReference type="InterPro" id="IPR046832">
    <property type="entry name" value="PPV_E1_DBD"/>
</dbReference>
<dbReference type="InterPro" id="IPR046935">
    <property type="entry name" value="PPV_E1_DBD_sf"/>
</dbReference>
<dbReference type="InterPro" id="IPR016393">
    <property type="entry name" value="Rep_E1_papillomaV"/>
</dbReference>
<dbReference type="InterPro" id="IPR037102">
    <property type="entry name" value="Znf_lg_T-Ag_D1_dom_sf"/>
</dbReference>
<dbReference type="Pfam" id="PF00519">
    <property type="entry name" value="PPV_E1_C"/>
    <property type="match status" value="1"/>
</dbReference>
<dbReference type="Pfam" id="PF20450">
    <property type="entry name" value="PPV_E1_DBD"/>
    <property type="match status" value="1"/>
</dbReference>
<dbReference type="Pfam" id="PF00524">
    <property type="entry name" value="PPV_E1_N"/>
    <property type="match status" value="1"/>
</dbReference>
<dbReference type="PIRSF" id="PIRSF003383">
    <property type="entry name" value="Rep_E1_papillomaV"/>
    <property type="match status" value="1"/>
</dbReference>
<dbReference type="SUPFAM" id="SSF55464">
    <property type="entry name" value="Origin of replication-binding domain, RBD-like"/>
    <property type="match status" value="1"/>
</dbReference>
<dbReference type="SUPFAM" id="SSF52540">
    <property type="entry name" value="P-loop containing nucleoside triphosphate hydrolases"/>
    <property type="match status" value="1"/>
</dbReference>
<dbReference type="PROSITE" id="PS51206">
    <property type="entry name" value="SF3_HELICASE_1"/>
    <property type="match status" value="1"/>
</dbReference>
<feature type="chain" id="PRO_0000133103" description="Replication protein E1">
    <location>
        <begin position="1"/>
        <end position="649"/>
    </location>
</feature>
<feature type="domain" description="SF3 helicase" evidence="1">
    <location>
        <begin position="452"/>
        <end position="602"/>
    </location>
</feature>
<feature type="region of interest" description="Disordered" evidence="2">
    <location>
        <begin position="138"/>
        <end position="169"/>
    </location>
</feature>
<feature type="region of interest" description="DNA-binding region" evidence="1">
    <location>
        <begin position="187"/>
        <end position="353"/>
    </location>
</feature>
<feature type="short sequence motif" description="Nuclear localization signal" evidence="1">
    <location>
        <begin position="83"/>
        <end position="85"/>
    </location>
</feature>
<feature type="short sequence motif" description="Nuclear export signal" evidence="1">
    <location>
        <begin position="106"/>
        <end position="115"/>
    </location>
</feature>
<feature type="binding site" evidence="1">
    <location>
        <begin position="478"/>
        <end position="485"/>
    </location>
    <ligand>
        <name>ATP</name>
        <dbReference type="ChEBI" id="CHEBI:30616"/>
    </ligand>
</feature>
<feature type="modified residue" description="Phosphoserine; by host" evidence="1">
    <location>
        <position position="89"/>
    </location>
</feature>
<feature type="modified residue" description="Phosphoserine; by host" evidence="1">
    <location>
        <position position="93"/>
    </location>
</feature>
<feature type="modified residue" description="Phosphoserine; by host" evidence="1">
    <location>
        <position position="107"/>
    </location>
</feature>
<feature type="cross-link" description="Glycyl lysine isopeptide (Lys-Gly) (interchain with G-Cter in SUMO)" evidence="1">
    <location>
        <position position="559"/>
    </location>
</feature>
<accession>Q84293</accession>
<comment type="function">
    <text evidence="1">ATP-dependent DNA 3'-5' helicase required for initiation of viral DNA replication. It forms a complex with the viral E2 protein. The E1-E2 complex binds to the replication origin which contains binding sites for both proteins. During the initial step, a dimer of E1 interacts with a dimer of protein E2 leading to a complex that binds the viral origin of replication with high specificity. Then, a second dimer of E1 displaces the E2 dimer in an ATP-dependent manner to form the E1 tetramer. Following this, two E1 monomers are added to each half of the site, which results in the formation of two E1 trimers on the viral ori. Subsequently, two hexamers will be created. The double hexamer acts as a bi-directional helicase machinery and unwinds the viral DNA and then recruits the host DNA polymerase to start replication.</text>
</comment>
<comment type="catalytic activity">
    <reaction evidence="1">
        <text>Couples ATP hydrolysis with the unwinding of duplex DNA by translocating in the 3'-5' direction.</text>
        <dbReference type="EC" id="5.6.2.4"/>
    </reaction>
</comment>
<comment type="catalytic activity">
    <reaction evidence="1">
        <text>ATP + H2O = ADP + phosphate + H(+)</text>
        <dbReference type="Rhea" id="RHEA:13065"/>
        <dbReference type="ChEBI" id="CHEBI:15377"/>
        <dbReference type="ChEBI" id="CHEBI:15378"/>
        <dbReference type="ChEBI" id="CHEBI:30616"/>
        <dbReference type="ChEBI" id="CHEBI:43474"/>
        <dbReference type="ChEBI" id="CHEBI:456216"/>
        <dbReference type="EC" id="5.6.2.4"/>
    </reaction>
</comment>
<comment type="subunit">
    <text evidence="1">Can form hexamers. Interacts with E2 protein; this interaction increases E1 DNA binding specificity. Interacts with host DNA polymerase subunit POLA2. Interacts with host single stranded DNA-binding protein RPA1. Interacts with host TOP1; this interaction stimulates the enzymatic activity of TOP1.</text>
</comment>
<comment type="subcellular location">
    <subcellularLocation>
        <location evidence="1">Host nucleus</location>
    </subcellularLocation>
</comment>
<comment type="PTM">
    <text evidence="1">Phosphorylated.</text>
</comment>
<comment type="PTM">
    <text evidence="1">Sumoylated.</text>
</comment>
<comment type="similarity">
    <text evidence="1">Belongs to the papillomaviridae E1 protein family.</text>
</comment>
<protein>
    <recommendedName>
        <fullName evidence="1">Replication protein E1</fullName>
        <ecNumber evidence="1">5.6.2.4</ecNumber>
    </recommendedName>
    <alternativeName>
        <fullName evidence="1">ATP-dependent helicase E1</fullName>
    </alternativeName>
    <alternativeName>
        <fullName evidence="1">DNA 3'-5' helicase E1</fullName>
    </alternativeName>
</protein>
<sequence>MADDSGTENEGSGCTGWFMVEAIVQHPTGTQISDDEDEEVEDSGYDMVDFIDDSNITHNSLEAQALFNRQEADTHYATVQDLKRKYLGSPYVSPINTIAEAVESEISPRLDAIKLTRQPKKVKRRLFQTRELTDSGYGYSEVEAGTGTQVEKHGVPENGGDGQEKDTGRDIEGEEHTEAEAPTNSVREHAGTAGILELLKCKDLRAALLGKFKECFGLSFIDLIRPFKSDKTTCADWVVAGFGIHHSISEAFQKLIEPLSLYAHIQWLTNAWGMVLLVLVRFKVNKSRSTVARTLATLLNIPDNQMLIEPPKIQSGVAALYWFRTGISNASTVIGEAPEWITRQTVIEHGLADSQFKLTEMVQWAYDNDICEESEIAFEYAQRGDFDSNARAFLNSNMQAKYVKDCATMCRHYKHAEMRKMSIKQWIKHRGSKIEGTGNWKPIVQFLRHQNIEFIPFLSKFKLWLHGTPKKNCIAIVGPPDTGKSYFCMSLISFLGGTVISHVNSSSHFWLQPLVDAKVALLDDATQPCWIYMDTYMRNLLDGNPMSIDRKHKALTLIKCPPLLVTSNIDITKEEKYKYLHTRVTTFTFPNPFPFDRNGNAVYELSNANWKCFFERLSSSLDIQDSEDEEDGSNSQAFRCVPGTVVRTL</sequence>
<reference key="1">
    <citation type="journal article" date="1995" name="Virology">
        <title>Sequence determination of human papillomavirus type 6a and assembly of virus-like particles in Saccharomyces cerevisiae.</title>
        <authorList>
            <person name="Hofmann K.J."/>
            <person name="Cook J.C."/>
            <person name="Joyce J.G."/>
            <person name="Brown D.R."/>
            <person name="Schultz L.D."/>
            <person name="George H.A."/>
            <person name="Rosolowsky M."/>
            <person name="Fife K.H."/>
            <person name="Jansen K.U."/>
        </authorList>
    </citation>
    <scope>NUCLEOTIDE SEQUENCE [GENOMIC DNA]</scope>
</reference>
<keyword id="KW-0067">ATP-binding</keyword>
<keyword id="KW-0235">DNA replication</keyword>
<keyword id="KW-0238">DNA-binding</keyword>
<keyword id="KW-0244">Early protein</keyword>
<keyword id="KW-0347">Helicase</keyword>
<keyword id="KW-1048">Host nucleus</keyword>
<keyword id="KW-0378">Hydrolase</keyword>
<keyword id="KW-0413">Isomerase</keyword>
<keyword id="KW-1017">Isopeptide bond</keyword>
<keyword id="KW-0547">Nucleotide-binding</keyword>
<keyword id="KW-0597">Phosphoprotein</keyword>
<keyword id="KW-0832">Ubl conjugation</keyword>
<organismHost>
    <name type="scientific">Homo sapiens</name>
    <name type="common">Human</name>
    <dbReference type="NCBI Taxonomy" id="9606"/>
</organismHost>
<name>VE1_HPV6A</name>
<gene>
    <name evidence="1" type="primary">E1</name>
</gene>
<proteinExistence type="inferred from homology"/>
<organism>
    <name type="scientific">Human papillomavirus type 6a</name>
    <dbReference type="NCBI Taxonomy" id="37122"/>
    <lineage>
        <taxon>Viruses</taxon>
        <taxon>Monodnaviria</taxon>
        <taxon>Shotokuvirae</taxon>
        <taxon>Cossaviricota</taxon>
        <taxon>Papovaviricetes</taxon>
        <taxon>Zurhausenvirales</taxon>
        <taxon>Papillomaviridae</taxon>
        <taxon>Firstpapillomavirinae</taxon>
        <taxon>Alphapapillomavirus</taxon>
        <taxon>Alphapapillomavirus 10</taxon>
    </lineage>
</organism>